<name>SIR5_DANRE</name>
<keyword id="KW-0002">3D-structure</keyword>
<keyword id="KW-0963">Cytoplasm</keyword>
<keyword id="KW-0479">Metal-binding</keyword>
<keyword id="KW-0496">Mitochondrion</keyword>
<keyword id="KW-0520">NAD</keyword>
<keyword id="KW-0539">Nucleus</keyword>
<keyword id="KW-1185">Reference proteome</keyword>
<keyword id="KW-0808">Transferase</keyword>
<keyword id="KW-0809">Transit peptide</keyword>
<keyword id="KW-0862">Zinc</keyword>
<feature type="transit peptide" description="Mitochondrion" evidence="1">
    <location>
        <begin position="1"/>
        <end position="32"/>
    </location>
</feature>
<feature type="chain" id="PRO_0000415573" description="NAD-dependent protein deacylase sirtuin-5, mitochondrial">
    <location>
        <begin position="33"/>
        <end position="305"/>
    </location>
</feature>
<feature type="domain" description="Deacetylase sirtuin-type" evidence="2">
    <location>
        <begin position="33"/>
        <end position="303"/>
    </location>
</feature>
<feature type="active site" description="Proton acceptor" evidence="2">
    <location>
        <position position="154"/>
    </location>
</feature>
<feature type="binding site" evidence="1">
    <location>
        <begin position="54"/>
        <end position="73"/>
    </location>
    <ligand>
        <name>NAD(+)</name>
        <dbReference type="ChEBI" id="CHEBI:57540"/>
    </ligand>
</feature>
<feature type="binding site" evidence="1">
    <location>
        <position position="98"/>
    </location>
    <ligand>
        <name>substrate</name>
    </ligand>
</feature>
<feature type="binding site" evidence="1">
    <location>
        <position position="101"/>
    </location>
    <ligand>
        <name>substrate</name>
    </ligand>
</feature>
<feature type="binding site" evidence="1">
    <location>
        <begin position="136"/>
        <end position="139"/>
    </location>
    <ligand>
        <name>NAD(+)</name>
        <dbReference type="ChEBI" id="CHEBI:57540"/>
    </ligand>
</feature>
<feature type="binding site" evidence="1">
    <location>
        <position position="162"/>
    </location>
    <ligand>
        <name>Zn(2+)</name>
        <dbReference type="ChEBI" id="CHEBI:29105"/>
    </ligand>
</feature>
<feature type="binding site" evidence="1">
    <location>
        <position position="165"/>
    </location>
    <ligand>
        <name>Zn(2+)</name>
        <dbReference type="ChEBI" id="CHEBI:29105"/>
    </ligand>
</feature>
<feature type="binding site" evidence="1">
    <location>
        <position position="203"/>
    </location>
    <ligand>
        <name>Zn(2+)</name>
        <dbReference type="ChEBI" id="CHEBI:29105"/>
    </ligand>
</feature>
<feature type="binding site" evidence="1">
    <location>
        <position position="208"/>
    </location>
    <ligand>
        <name>Zn(2+)</name>
        <dbReference type="ChEBI" id="CHEBI:29105"/>
    </ligand>
</feature>
<feature type="binding site" evidence="1">
    <location>
        <begin position="245"/>
        <end position="247"/>
    </location>
    <ligand>
        <name>NAD(+)</name>
        <dbReference type="ChEBI" id="CHEBI:57540"/>
    </ligand>
</feature>
<feature type="binding site" evidence="1">
    <location>
        <begin position="271"/>
        <end position="273"/>
    </location>
    <ligand>
        <name>NAD(+)</name>
        <dbReference type="ChEBI" id="CHEBI:57540"/>
    </ligand>
</feature>
<feature type="binding site" evidence="1">
    <location>
        <position position="289"/>
    </location>
    <ligand>
        <name>NAD(+)</name>
        <dbReference type="ChEBI" id="CHEBI:57540"/>
    </ligand>
</feature>
<feature type="helix" evidence="3">
    <location>
        <begin position="36"/>
        <end position="45"/>
    </location>
</feature>
<feature type="strand" evidence="3">
    <location>
        <begin position="47"/>
        <end position="53"/>
    </location>
</feature>
<feature type="helix" evidence="3">
    <location>
        <begin position="55"/>
        <end position="57"/>
    </location>
</feature>
<feature type="helix" evidence="3">
    <location>
        <begin position="59"/>
        <end position="61"/>
    </location>
</feature>
<feature type="strand" evidence="3">
    <location>
        <begin position="66"/>
        <end position="68"/>
    </location>
</feature>
<feature type="helix" evidence="4">
    <location>
        <begin position="69"/>
        <end position="71"/>
    </location>
</feature>
<feature type="helix" evidence="3">
    <location>
        <begin position="72"/>
        <end position="75"/>
    </location>
</feature>
<feature type="helix" evidence="3">
    <location>
        <begin position="78"/>
        <end position="81"/>
    </location>
</feature>
<feature type="helix" evidence="3">
    <location>
        <begin position="84"/>
        <end position="89"/>
    </location>
</feature>
<feature type="helix" evidence="3">
    <location>
        <begin position="91"/>
        <end position="105"/>
    </location>
</feature>
<feature type="helix" evidence="3">
    <location>
        <begin position="112"/>
        <end position="126"/>
    </location>
</feature>
<feature type="strand" evidence="3">
    <location>
        <begin position="130"/>
        <end position="135"/>
    </location>
</feature>
<feature type="helix" evidence="3">
    <location>
        <begin position="141"/>
        <end position="144"/>
    </location>
</feature>
<feature type="strand" evidence="3">
    <location>
        <begin position="149"/>
        <end position="152"/>
    </location>
</feature>
<feature type="strand" evidence="3">
    <location>
        <begin position="155"/>
        <end position="162"/>
    </location>
</feature>
<feature type="turn" evidence="3">
    <location>
        <begin position="163"/>
        <end position="165"/>
    </location>
</feature>
<feature type="strand" evidence="3">
    <location>
        <begin position="168"/>
        <end position="170"/>
    </location>
</feature>
<feature type="strand" evidence="3">
    <location>
        <begin position="174"/>
        <end position="177"/>
    </location>
</feature>
<feature type="helix" evidence="3">
    <location>
        <begin position="178"/>
        <end position="180"/>
    </location>
</feature>
<feature type="helix" evidence="3">
    <location>
        <begin position="191"/>
        <end position="193"/>
    </location>
</feature>
<feature type="helix" evidence="3">
    <location>
        <begin position="197"/>
        <end position="199"/>
    </location>
</feature>
<feature type="turn" evidence="3">
    <location>
        <begin position="206"/>
        <end position="208"/>
    </location>
</feature>
<feature type="strand" evidence="3">
    <location>
        <begin position="211"/>
        <end position="216"/>
    </location>
</feature>
<feature type="helix" evidence="3">
    <location>
        <begin position="225"/>
        <end position="237"/>
    </location>
</feature>
<feature type="strand" evidence="3">
    <location>
        <begin position="239"/>
        <end position="245"/>
    </location>
</feature>
<feature type="strand" evidence="5">
    <location>
        <begin position="248"/>
        <end position="250"/>
    </location>
</feature>
<feature type="helix" evidence="3">
    <location>
        <begin position="253"/>
        <end position="255"/>
    </location>
</feature>
<feature type="helix" evidence="3">
    <location>
        <begin position="256"/>
        <end position="261"/>
    </location>
</feature>
<feature type="turn" evidence="3">
    <location>
        <begin position="262"/>
        <end position="264"/>
    </location>
</feature>
<feature type="strand" evidence="3">
    <location>
        <begin position="267"/>
        <end position="273"/>
    </location>
</feature>
<feature type="helix" evidence="3">
    <location>
        <begin position="278"/>
        <end position="280"/>
    </location>
</feature>
<feature type="strand" evidence="3">
    <location>
        <begin position="281"/>
        <end position="287"/>
    </location>
</feature>
<feature type="helix" evidence="3">
    <location>
        <begin position="289"/>
        <end position="296"/>
    </location>
</feature>
<reference key="1">
    <citation type="journal article" date="2013" name="Nature">
        <title>The zebrafish reference genome sequence and its relationship to the human genome.</title>
        <authorList>
            <person name="Howe K."/>
            <person name="Clark M.D."/>
            <person name="Torroja C.F."/>
            <person name="Torrance J."/>
            <person name="Berthelot C."/>
            <person name="Muffato M."/>
            <person name="Collins J.E."/>
            <person name="Humphray S."/>
            <person name="McLaren K."/>
            <person name="Matthews L."/>
            <person name="McLaren S."/>
            <person name="Sealy I."/>
            <person name="Caccamo M."/>
            <person name="Churcher C."/>
            <person name="Scott C."/>
            <person name="Barrett J.C."/>
            <person name="Koch R."/>
            <person name="Rauch G.J."/>
            <person name="White S."/>
            <person name="Chow W."/>
            <person name="Kilian B."/>
            <person name="Quintais L.T."/>
            <person name="Guerra-Assuncao J.A."/>
            <person name="Zhou Y."/>
            <person name="Gu Y."/>
            <person name="Yen J."/>
            <person name="Vogel J.H."/>
            <person name="Eyre T."/>
            <person name="Redmond S."/>
            <person name="Banerjee R."/>
            <person name="Chi J."/>
            <person name="Fu B."/>
            <person name="Langley E."/>
            <person name="Maguire S.F."/>
            <person name="Laird G.K."/>
            <person name="Lloyd D."/>
            <person name="Kenyon E."/>
            <person name="Donaldson S."/>
            <person name="Sehra H."/>
            <person name="Almeida-King J."/>
            <person name="Loveland J."/>
            <person name="Trevanion S."/>
            <person name="Jones M."/>
            <person name="Quail M."/>
            <person name="Willey D."/>
            <person name="Hunt A."/>
            <person name="Burton J."/>
            <person name="Sims S."/>
            <person name="McLay K."/>
            <person name="Plumb B."/>
            <person name="Davis J."/>
            <person name="Clee C."/>
            <person name="Oliver K."/>
            <person name="Clark R."/>
            <person name="Riddle C."/>
            <person name="Elliot D."/>
            <person name="Threadgold G."/>
            <person name="Harden G."/>
            <person name="Ware D."/>
            <person name="Begum S."/>
            <person name="Mortimore B."/>
            <person name="Kerry G."/>
            <person name="Heath P."/>
            <person name="Phillimore B."/>
            <person name="Tracey A."/>
            <person name="Corby N."/>
            <person name="Dunn M."/>
            <person name="Johnson C."/>
            <person name="Wood J."/>
            <person name="Clark S."/>
            <person name="Pelan S."/>
            <person name="Griffiths G."/>
            <person name="Smith M."/>
            <person name="Glithero R."/>
            <person name="Howden P."/>
            <person name="Barker N."/>
            <person name="Lloyd C."/>
            <person name="Stevens C."/>
            <person name="Harley J."/>
            <person name="Holt K."/>
            <person name="Panagiotidis G."/>
            <person name="Lovell J."/>
            <person name="Beasley H."/>
            <person name="Henderson C."/>
            <person name="Gordon D."/>
            <person name="Auger K."/>
            <person name="Wright D."/>
            <person name="Collins J."/>
            <person name="Raisen C."/>
            <person name="Dyer L."/>
            <person name="Leung K."/>
            <person name="Robertson L."/>
            <person name="Ambridge K."/>
            <person name="Leongamornlert D."/>
            <person name="McGuire S."/>
            <person name="Gilderthorp R."/>
            <person name="Griffiths C."/>
            <person name="Manthravadi D."/>
            <person name="Nichol S."/>
            <person name="Barker G."/>
            <person name="Whitehead S."/>
            <person name="Kay M."/>
            <person name="Brown J."/>
            <person name="Murnane C."/>
            <person name="Gray E."/>
            <person name="Humphries M."/>
            <person name="Sycamore N."/>
            <person name="Barker D."/>
            <person name="Saunders D."/>
            <person name="Wallis J."/>
            <person name="Babbage A."/>
            <person name="Hammond S."/>
            <person name="Mashreghi-Mohammadi M."/>
            <person name="Barr L."/>
            <person name="Martin S."/>
            <person name="Wray P."/>
            <person name="Ellington A."/>
            <person name="Matthews N."/>
            <person name="Ellwood M."/>
            <person name="Woodmansey R."/>
            <person name="Clark G."/>
            <person name="Cooper J."/>
            <person name="Tromans A."/>
            <person name="Grafham D."/>
            <person name="Skuce C."/>
            <person name="Pandian R."/>
            <person name="Andrews R."/>
            <person name="Harrison E."/>
            <person name="Kimberley A."/>
            <person name="Garnett J."/>
            <person name="Fosker N."/>
            <person name="Hall R."/>
            <person name="Garner P."/>
            <person name="Kelly D."/>
            <person name="Bird C."/>
            <person name="Palmer S."/>
            <person name="Gehring I."/>
            <person name="Berger A."/>
            <person name="Dooley C.M."/>
            <person name="Ersan-Urun Z."/>
            <person name="Eser C."/>
            <person name="Geiger H."/>
            <person name="Geisler M."/>
            <person name="Karotki L."/>
            <person name="Kirn A."/>
            <person name="Konantz J."/>
            <person name="Konantz M."/>
            <person name="Oberlander M."/>
            <person name="Rudolph-Geiger S."/>
            <person name="Teucke M."/>
            <person name="Lanz C."/>
            <person name="Raddatz G."/>
            <person name="Osoegawa K."/>
            <person name="Zhu B."/>
            <person name="Rapp A."/>
            <person name="Widaa S."/>
            <person name="Langford C."/>
            <person name="Yang F."/>
            <person name="Schuster S.C."/>
            <person name="Carter N.P."/>
            <person name="Harrow J."/>
            <person name="Ning Z."/>
            <person name="Herrero J."/>
            <person name="Searle S.M."/>
            <person name="Enright A."/>
            <person name="Geisler R."/>
            <person name="Plasterk R.H."/>
            <person name="Lee C."/>
            <person name="Westerfield M."/>
            <person name="de Jong P.J."/>
            <person name="Zon L.I."/>
            <person name="Postlethwait J.H."/>
            <person name="Nusslein-Volhard C."/>
            <person name="Hubbard T.J."/>
            <person name="Roest Crollius H."/>
            <person name="Rogers J."/>
            <person name="Stemple D.L."/>
        </authorList>
    </citation>
    <scope>NUCLEOTIDE SEQUENCE [LARGE SCALE GENOMIC DNA]</scope>
    <source>
        <strain>Tuebingen</strain>
    </source>
</reference>
<reference key="2">
    <citation type="submission" date="2004-07" db="EMBL/GenBank/DDBJ databases">
        <authorList>
            <consortium name="NIH - Zebrafish Gene Collection (ZGC) project"/>
        </authorList>
    </citation>
    <scope>NUCLEOTIDE SEQUENCE [LARGE SCALE MRNA]</scope>
</reference>
<sequence>MIVRQLWCSRGSTSHLCAAVRLNWRSPKMTRPSSDLTAFREHFAKAKHIAIITGAGVSAESGVPTFRGPGGFWRKWQAQDLATPEAFSRDPSLVWEFYHYRREVMRSKMPNPAHLAIAECEARLGQQGRSVVIITQNIDELHHRAGSKHVYEIHGSLFKTRCMSCGEVKANHKSPICPALDGKGAPDPNTKEARIPVELLPRCERKSCNGLLRPHVVWFGETLDSDILTAVERELEKCDLCLVVGTSSIVYPAAMFAPQVASRGVPVAEFNMECTPATQRFKYHFEGPCGSTLPPALERHESEAV</sequence>
<comment type="function">
    <text evidence="1">NAD-dependent lysine demalonylase, desuccinylase and deglutarylase that specifically removes malonyl, succinyl and glutaryl groups on target proteins. Has weak NAD-dependent protein deacetylase activity; however this activity may not be physiologically relevant in vivo.</text>
</comment>
<comment type="catalytic activity">
    <reaction evidence="1">
        <text>N(6)-malonyl-L-lysyl-[protein] + NAD(+) + H2O = 2''-O-malonyl-ADP-D-ribose + nicotinamide + L-lysyl-[protein]</text>
        <dbReference type="Rhea" id="RHEA:47672"/>
        <dbReference type="Rhea" id="RHEA-COMP:9752"/>
        <dbReference type="Rhea" id="RHEA-COMP:11878"/>
        <dbReference type="ChEBI" id="CHEBI:15377"/>
        <dbReference type="ChEBI" id="CHEBI:17154"/>
        <dbReference type="ChEBI" id="CHEBI:29969"/>
        <dbReference type="ChEBI" id="CHEBI:57540"/>
        <dbReference type="ChEBI" id="CHEBI:87831"/>
        <dbReference type="ChEBI" id="CHEBI:87833"/>
    </reaction>
</comment>
<comment type="catalytic activity">
    <reaction evidence="1">
        <text>N(6)-succinyl-L-lysyl-[protein] + NAD(+) + H2O = 2''-O-succinyl-ADP-D-ribose + nicotinamide + L-lysyl-[protein]</text>
        <dbReference type="Rhea" id="RHEA:47668"/>
        <dbReference type="Rhea" id="RHEA-COMP:9752"/>
        <dbReference type="Rhea" id="RHEA-COMP:11877"/>
        <dbReference type="ChEBI" id="CHEBI:15377"/>
        <dbReference type="ChEBI" id="CHEBI:17154"/>
        <dbReference type="ChEBI" id="CHEBI:29969"/>
        <dbReference type="ChEBI" id="CHEBI:57540"/>
        <dbReference type="ChEBI" id="CHEBI:87830"/>
        <dbReference type="ChEBI" id="CHEBI:87832"/>
    </reaction>
</comment>
<comment type="catalytic activity">
    <reaction evidence="1">
        <text>N(6)-glutaryl-L-lysyl-[protein] + NAD(+) + H2O = 2''-O-glutaryl-ADP-D-ribose + nicotinamide + L-lysyl-[protein]</text>
        <dbReference type="Rhea" id="RHEA:47664"/>
        <dbReference type="Rhea" id="RHEA-COMP:9752"/>
        <dbReference type="Rhea" id="RHEA-COMP:11875"/>
        <dbReference type="ChEBI" id="CHEBI:15377"/>
        <dbReference type="ChEBI" id="CHEBI:17154"/>
        <dbReference type="ChEBI" id="CHEBI:29969"/>
        <dbReference type="ChEBI" id="CHEBI:57540"/>
        <dbReference type="ChEBI" id="CHEBI:87828"/>
        <dbReference type="ChEBI" id="CHEBI:87829"/>
    </reaction>
</comment>
<comment type="cofactor">
    <cofactor evidence="1">
        <name>Zn(2+)</name>
        <dbReference type="ChEBI" id="CHEBI:29105"/>
    </cofactor>
    <text evidence="1">Binds 1 zinc ion per subunit.</text>
</comment>
<comment type="subcellular location">
    <subcellularLocation>
        <location evidence="1">Mitochondrion</location>
    </subcellularLocation>
    <subcellularLocation>
        <location evidence="1">Cytoplasm</location>
        <location evidence="1">Cytosol</location>
    </subcellularLocation>
    <subcellularLocation>
        <location evidence="1">Nucleus</location>
    </subcellularLocation>
    <text evidence="1">Mainly mitochondrial. Also present extramitochondrially, with a fraction present in the cytosol and very small amounts also detected in the nucleus.</text>
</comment>
<comment type="domain">
    <text evidence="1">In contrast to class I sirtuins, class III sirtuins have only weak deacetylase activity. Difference in substrate specificity is probably due to a larger hydrophobic pocket with 2 residues (Tyr-98 and Arg-101) that bind to malonylated and succinylated substrates and define the specificity.</text>
</comment>
<comment type="similarity">
    <text evidence="1">Belongs to the sirtuin family. Class III subfamily.</text>
</comment>
<organism>
    <name type="scientific">Danio rerio</name>
    <name type="common">Zebrafish</name>
    <name type="synonym">Brachydanio rerio</name>
    <dbReference type="NCBI Taxonomy" id="7955"/>
    <lineage>
        <taxon>Eukaryota</taxon>
        <taxon>Metazoa</taxon>
        <taxon>Chordata</taxon>
        <taxon>Craniata</taxon>
        <taxon>Vertebrata</taxon>
        <taxon>Euteleostomi</taxon>
        <taxon>Actinopterygii</taxon>
        <taxon>Neopterygii</taxon>
        <taxon>Teleostei</taxon>
        <taxon>Ostariophysi</taxon>
        <taxon>Cypriniformes</taxon>
        <taxon>Danionidae</taxon>
        <taxon>Danioninae</taxon>
        <taxon>Danio</taxon>
    </lineage>
</organism>
<dbReference type="EC" id="2.3.1.-" evidence="1"/>
<dbReference type="EMBL" id="BX511260">
    <property type="protein sequence ID" value="CAP09604.1"/>
    <property type="molecule type" value="Genomic_DNA"/>
</dbReference>
<dbReference type="EMBL" id="BC075987">
    <property type="protein sequence ID" value="AAH75987.1"/>
    <property type="molecule type" value="mRNA"/>
</dbReference>
<dbReference type="RefSeq" id="NP_001002605.1">
    <property type="nucleotide sequence ID" value="NM_001002605.1"/>
</dbReference>
<dbReference type="PDB" id="4UTN">
    <property type="method" value="X-ray"/>
    <property type="resolution" value="3.00 A"/>
    <property type="chains" value="A/B=30-298"/>
</dbReference>
<dbReference type="PDB" id="4UTR">
    <property type="method" value="X-ray"/>
    <property type="resolution" value="2.90 A"/>
    <property type="chains" value="A/B=30-298"/>
</dbReference>
<dbReference type="PDB" id="4UTV">
    <property type="method" value="X-ray"/>
    <property type="resolution" value="2.40 A"/>
    <property type="chains" value="A/B=30-298"/>
</dbReference>
<dbReference type="PDB" id="4UTX">
    <property type="method" value="X-ray"/>
    <property type="resolution" value="3.10 A"/>
    <property type="chains" value="A/B=30-298"/>
</dbReference>
<dbReference type="PDB" id="4UTZ">
    <property type="method" value="X-ray"/>
    <property type="resolution" value="3.30 A"/>
    <property type="chains" value="A/B=30-298"/>
</dbReference>
<dbReference type="PDB" id="4UU7">
    <property type="method" value="X-ray"/>
    <property type="resolution" value="3.00 A"/>
    <property type="chains" value="A/B=30-298"/>
</dbReference>
<dbReference type="PDB" id="4UU8">
    <property type="method" value="X-ray"/>
    <property type="resolution" value="2.90 A"/>
    <property type="chains" value="A/B=30-298"/>
</dbReference>
<dbReference type="PDB" id="4UUA">
    <property type="method" value="X-ray"/>
    <property type="resolution" value="2.80 A"/>
    <property type="chains" value="A/B=30-298"/>
</dbReference>
<dbReference type="PDB" id="4UUB">
    <property type="method" value="X-ray"/>
    <property type="resolution" value="2.90 A"/>
    <property type="chains" value="A/B=30-298"/>
</dbReference>
<dbReference type="PDB" id="5OJO">
    <property type="method" value="X-ray"/>
    <property type="resolution" value="3.10 A"/>
    <property type="chains" value="A/B=30-298"/>
</dbReference>
<dbReference type="PDB" id="6ENX">
    <property type="method" value="X-ray"/>
    <property type="resolution" value="1.95 A"/>
    <property type="chains" value="A=28-298"/>
</dbReference>
<dbReference type="PDB" id="6EO0">
    <property type="method" value="X-ray"/>
    <property type="resolution" value="2.40 A"/>
    <property type="chains" value="A/B/C/D=28-298"/>
</dbReference>
<dbReference type="PDB" id="6FKY">
    <property type="method" value="X-ray"/>
    <property type="resolution" value="2.98 A"/>
    <property type="chains" value="A/B=28-305"/>
</dbReference>
<dbReference type="PDB" id="6FKZ">
    <property type="method" value="X-ray"/>
    <property type="resolution" value="3.30 A"/>
    <property type="chains" value="A/B=28-305"/>
</dbReference>
<dbReference type="PDB" id="6FLG">
    <property type="method" value="X-ray"/>
    <property type="resolution" value="2.50 A"/>
    <property type="chains" value="A/B=28-305"/>
</dbReference>
<dbReference type="PDBsum" id="4UTN"/>
<dbReference type="PDBsum" id="4UTR"/>
<dbReference type="PDBsum" id="4UTV"/>
<dbReference type="PDBsum" id="4UTX"/>
<dbReference type="PDBsum" id="4UTZ"/>
<dbReference type="PDBsum" id="4UU7"/>
<dbReference type="PDBsum" id="4UU8"/>
<dbReference type="PDBsum" id="4UUA"/>
<dbReference type="PDBsum" id="4UUB"/>
<dbReference type="PDBsum" id="5OJO"/>
<dbReference type="PDBsum" id="6ENX"/>
<dbReference type="PDBsum" id="6EO0"/>
<dbReference type="PDBsum" id="6FKY"/>
<dbReference type="PDBsum" id="6FKZ"/>
<dbReference type="PDBsum" id="6FLG"/>
<dbReference type="SMR" id="Q6DHI5"/>
<dbReference type="FunCoup" id="Q6DHI5">
    <property type="interactions" value="67"/>
</dbReference>
<dbReference type="STRING" id="7955.ENSDARP00000040792"/>
<dbReference type="PaxDb" id="7955-ENSDARP00000104727"/>
<dbReference type="Ensembl" id="ENSDART00000040793">
    <property type="protein sequence ID" value="ENSDARP00000040792"/>
    <property type="gene ID" value="ENSDARG00000039684"/>
</dbReference>
<dbReference type="GeneID" id="436878"/>
<dbReference type="KEGG" id="dre:436878"/>
<dbReference type="AGR" id="ZFIN:ZDB-GENE-040718-349"/>
<dbReference type="CTD" id="23408"/>
<dbReference type="ZFIN" id="ZDB-GENE-040718-349">
    <property type="gene designation" value="sirt5"/>
</dbReference>
<dbReference type="eggNOG" id="KOG2684">
    <property type="taxonomic scope" value="Eukaryota"/>
</dbReference>
<dbReference type="HOGENOM" id="CLU_023643_3_1_1"/>
<dbReference type="InParanoid" id="Q6DHI5"/>
<dbReference type="OMA" id="LIHMHGE"/>
<dbReference type="OrthoDB" id="424302at2759"/>
<dbReference type="PhylomeDB" id="Q6DHI5"/>
<dbReference type="TreeFam" id="TF106183"/>
<dbReference type="BRENDA" id="2.3.1.B43">
    <property type="organism ID" value="928"/>
</dbReference>
<dbReference type="Reactome" id="R-DRE-2151201">
    <property type="pathway name" value="Transcriptional activation of mitochondrial biogenesis"/>
</dbReference>
<dbReference type="EvolutionaryTrace" id="Q6DHI5"/>
<dbReference type="PRO" id="PR:Q6DHI5"/>
<dbReference type="Proteomes" id="UP000000437">
    <property type="component" value="Chromosome 20"/>
</dbReference>
<dbReference type="Bgee" id="ENSDARG00000039684">
    <property type="expression patterns" value="Expressed in muscle tissue and 21 other cell types or tissues"/>
</dbReference>
<dbReference type="GO" id="GO:0005829">
    <property type="term" value="C:cytosol"/>
    <property type="evidence" value="ECO:0000250"/>
    <property type="project" value="UniProtKB"/>
</dbReference>
<dbReference type="GO" id="GO:0005759">
    <property type="term" value="C:mitochondrial matrix"/>
    <property type="evidence" value="ECO:0000318"/>
    <property type="project" value="GO_Central"/>
</dbReference>
<dbReference type="GO" id="GO:0005739">
    <property type="term" value="C:mitochondrion"/>
    <property type="evidence" value="ECO:0000250"/>
    <property type="project" value="UniProtKB"/>
</dbReference>
<dbReference type="GO" id="GO:0005634">
    <property type="term" value="C:nucleus"/>
    <property type="evidence" value="ECO:0000318"/>
    <property type="project" value="GO_Central"/>
</dbReference>
<dbReference type="GO" id="GO:0000035">
    <property type="term" value="F:acyl binding"/>
    <property type="evidence" value="ECO:0000314"/>
    <property type="project" value="ZFIN"/>
</dbReference>
<dbReference type="GO" id="GO:1901363">
    <property type="term" value="F:heterocyclic compound binding"/>
    <property type="evidence" value="ECO:0000314"/>
    <property type="project" value="ZFIN"/>
</dbReference>
<dbReference type="GO" id="GO:0017136">
    <property type="term" value="F:histone deacetylase activity, NAD-dependent"/>
    <property type="evidence" value="ECO:0000318"/>
    <property type="project" value="GO_Central"/>
</dbReference>
<dbReference type="GO" id="GO:0070403">
    <property type="term" value="F:NAD+ binding"/>
    <property type="evidence" value="ECO:0000250"/>
    <property type="project" value="UniProtKB"/>
</dbReference>
<dbReference type="GO" id="GO:0061697">
    <property type="term" value="F:protein-glutaryllysine deglutarylase activity"/>
    <property type="evidence" value="ECO:0000318"/>
    <property type="project" value="GO_Central"/>
</dbReference>
<dbReference type="GO" id="GO:0036054">
    <property type="term" value="F:protein-malonyllysine demalonylase activity"/>
    <property type="evidence" value="ECO:0000250"/>
    <property type="project" value="UniProtKB"/>
</dbReference>
<dbReference type="GO" id="GO:0036055">
    <property type="term" value="F:protein-succinyllysine desuccinylase activity"/>
    <property type="evidence" value="ECO:0000250"/>
    <property type="project" value="UniProtKB"/>
</dbReference>
<dbReference type="GO" id="GO:0008270">
    <property type="term" value="F:zinc ion binding"/>
    <property type="evidence" value="ECO:0000250"/>
    <property type="project" value="UniProtKB"/>
</dbReference>
<dbReference type="GO" id="GO:0036047">
    <property type="term" value="P:peptidyl-lysine demalonylation"/>
    <property type="evidence" value="ECO:0000250"/>
    <property type="project" value="UniProtKB"/>
</dbReference>
<dbReference type="GO" id="GO:0036049">
    <property type="term" value="P:peptidyl-lysine desuccinylation"/>
    <property type="evidence" value="ECO:0000250"/>
    <property type="project" value="UniProtKB"/>
</dbReference>
<dbReference type="GO" id="GO:0036048">
    <property type="term" value="P:protein desuccinylation"/>
    <property type="evidence" value="ECO:0000250"/>
    <property type="project" value="UniProtKB"/>
</dbReference>
<dbReference type="GO" id="GO:0010566">
    <property type="term" value="P:regulation of ketone biosynthetic process"/>
    <property type="evidence" value="ECO:0000250"/>
    <property type="project" value="UniProtKB"/>
</dbReference>
<dbReference type="CDD" id="cd01412">
    <property type="entry name" value="SIRT5_Af1_CobB"/>
    <property type="match status" value="1"/>
</dbReference>
<dbReference type="FunFam" id="3.30.1600.10:FF:000005">
    <property type="entry name" value="NAD-dependent protein deacylase sirtuin-5, mitochondrial"/>
    <property type="match status" value="1"/>
</dbReference>
<dbReference type="Gene3D" id="3.30.1600.10">
    <property type="entry name" value="SIR2/SIRT2 'Small Domain"/>
    <property type="match status" value="1"/>
</dbReference>
<dbReference type="Gene3D" id="3.40.50.1220">
    <property type="entry name" value="TPP-binding domain"/>
    <property type="match status" value="1"/>
</dbReference>
<dbReference type="HAMAP" id="MF_01121">
    <property type="entry name" value="Sirtuin_ClassIII"/>
    <property type="match status" value="1"/>
</dbReference>
<dbReference type="InterPro" id="IPR029035">
    <property type="entry name" value="DHS-like_NAD/FAD-binding_dom"/>
</dbReference>
<dbReference type="InterPro" id="IPR050134">
    <property type="entry name" value="NAD-dep_sirtuin_deacylases"/>
</dbReference>
<dbReference type="InterPro" id="IPR003000">
    <property type="entry name" value="Sirtuin"/>
</dbReference>
<dbReference type="InterPro" id="IPR026591">
    <property type="entry name" value="Sirtuin_cat_small_dom_sf"/>
</dbReference>
<dbReference type="InterPro" id="IPR027546">
    <property type="entry name" value="Sirtuin_class_III"/>
</dbReference>
<dbReference type="InterPro" id="IPR026590">
    <property type="entry name" value="Ssirtuin_cat_dom"/>
</dbReference>
<dbReference type="NCBIfam" id="NF001753">
    <property type="entry name" value="PRK00481.1-3"/>
    <property type="match status" value="1"/>
</dbReference>
<dbReference type="PANTHER" id="PTHR11085">
    <property type="entry name" value="NAD-DEPENDENT PROTEIN DEACYLASE SIRTUIN-5, MITOCHONDRIAL-RELATED"/>
    <property type="match status" value="1"/>
</dbReference>
<dbReference type="PANTHER" id="PTHR11085:SF10">
    <property type="entry name" value="NAD-DEPENDENT PROTEIN DEACYLASE SIRTUIN-5, MITOCHONDRIAL-RELATED"/>
    <property type="match status" value="1"/>
</dbReference>
<dbReference type="Pfam" id="PF02146">
    <property type="entry name" value="SIR2"/>
    <property type="match status" value="1"/>
</dbReference>
<dbReference type="SUPFAM" id="SSF52467">
    <property type="entry name" value="DHS-like NAD/FAD-binding domain"/>
    <property type="match status" value="1"/>
</dbReference>
<dbReference type="PROSITE" id="PS50305">
    <property type="entry name" value="SIRTUIN"/>
    <property type="match status" value="1"/>
</dbReference>
<gene>
    <name type="primary">sirt5</name>
    <name type="ORF">si:ch211-121a2.1</name>
</gene>
<protein>
    <recommendedName>
        <fullName evidence="1">NAD-dependent protein deacylase sirtuin-5, mitochondrial</fullName>
        <ecNumber evidence="1">2.3.1.-</ecNumber>
    </recommendedName>
    <alternativeName>
        <fullName evidence="1">Regulatory protein SIR2 homolog 5</fullName>
    </alternativeName>
</protein>
<evidence type="ECO:0000255" key="1">
    <source>
        <dbReference type="HAMAP-Rule" id="MF_03160"/>
    </source>
</evidence>
<evidence type="ECO:0000255" key="2">
    <source>
        <dbReference type="PROSITE-ProRule" id="PRU00236"/>
    </source>
</evidence>
<evidence type="ECO:0007829" key="3">
    <source>
        <dbReference type="PDB" id="6ENX"/>
    </source>
</evidence>
<evidence type="ECO:0007829" key="4">
    <source>
        <dbReference type="PDB" id="6EO0"/>
    </source>
</evidence>
<evidence type="ECO:0007829" key="5">
    <source>
        <dbReference type="PDB" id="6FLG"/>
    </source>
</evidence>
<accession>Q6DHI5</accession>
<proteinExistence type="evidence at protein level"/>